<keyword id="KW-0238">DNA-binding</keyword>
<keyword id="KW-0479">Metal-binding</keyword>
<keyword id="KW-0533">Nickel</keyword>
<keyword id="KW-0804">Transcription</keyword>
<keyword id="KW-0805">Transcription regulation</keyword>
<comment type="function">
    <text evidence="1">Transcriptional regulator.</text>
</comment>
<comment type="cofactor">
    <cofactor evidence="1">
        <name>Ni(2+)</name>
        <dbReference type="ChEBI" id="CHEBI:49786"/>
    </cofactor>
    <text evidence="1">Binds 1 nickel ion per subunit.</text>
</comment>
<comment type="similarity">
    <text evidence="1">Belongs to the transcriptional regulatory CopG/NikR family.</text>
</comment>
<feature type="chain" id="PRO_1000125827" description="Putative nickel-responsive regulator">
    <location>
        <begin position="1"/>
        <end position="142"/>
    </location>
</feature>
<feature type="binding site" evidence="1">
    <location>
        <position position="77"/>
    </location>
    <ligand>
        <name>Ni(2+)</name>
        <dbReference type="ChEBI" id="CHEBI:49786"/>
    </ligand>
</feature>
<feature type="binding site" evidence="1">
    <location>
        <position position="88"/>
    </location>
    <ligand>
        <name>Ni(2+)</name>
        <dbReference type="ChEBI" id="CHEBI:49786"/>
    </ligand>
</feature>
<feature type="binding site" evidence="1">
    <location>
        <position position="90"/>
    </location>
    <ligand>
        <name>Ni(2+)</name>
        <dbReference type="ChEBI" id="CHEBI:49786"/>
    </ligand>
</feature>
<feature type="binding site" evidence="1">
    <location>
        <position position="96"/>
    </location>
    <ligand>
        <name>Ni(2+)</name>
        <dbReference type="ChEBI" id="CHEBI:49786"/>
    </ligand>
</feature>
<accession>B0R2R5</accession>
<protein>
    <recommendedName>
        <fullName evidence="1">Putative nickel-responsive regulator</fullName>
    </recommendedName>
</protein>
<organism>
    <name type="scientific">Halobacterium salinarum (strain ATCC 29341 / DSM 671 / R1)</name>
    <dbReference type="NCBI Taxonomy" id="478009"/>
    <lineage>
        <taxon>Archaea</taxon>
        <taxon>Methanobacteriati</taxon>
        <taxon>Methanobacteriota</taxon>
        <taxon>Stenosarchaea group</taxon>
        <taxon>Halobacteria</taxon>
        <taxon>Halobacteriales</taxon>
        <taxon>Halobacteriaceae</taxon>
        <taxon>Halobacterium</taxon>
        <taxon>Halobacterium salinarum NRC-34001</taxon>
    </lineage>
</organism>
<gene>
    <name type="ordered locus">OE_1241R</name>
</gene>
<reference key="1">
    <citation type="journal article" date="2008" name="Genomics">
        <title>Evolution in the laboratory: the genome of Halobacterium salinarum strain R1 compared to that of strain NRC-1.</title>
        <authorList>
            <person name="Pfeiffer F."/>
            <person name="Schuster S.C."/>
            <person name="Broicher A."/>
            <person name="Falb M."/>
            <person name="Palm P."/>
            <person name="Rodewald K."/>
            <person name="Ruepp A."/>
            <person name="Soppa J."/>
            <person name="Tittor J."/>
            <person name="Oesterhelt D."/>
        </authorList>
    </citation>
    <scope>NUCLEOTIDE SEQUENCE [LARGE SCALE GENOMIC DNA]</scope>
    <source>
        <strain>ATCC 29341 / DSM 671 / R1</strain>
    </source>
</reference>
<dbReference type="EMBL" id="AM774415">
    <property type="protein sequence ID" value="CAP13025.1"/>
    <property type="molecule type" value="Genomic_DNA"/>
</dbReference>
<dbReference type="RefSeq" id="WP_012289104.1">
    <property type="nucleotide sequence ID" value="NC_010364.1"/>
</dbReference>
<dbReference type="SMR" id="B0R2R5"/>
<dbReference type="EnsemblBacteria" id="CAP13025">
    <property type="protein sequence ID" value="CAP13025"/>
    <property type="gene ID" value="OE_1241R"/>
</dbReference>
<dbReference type="KEGG" id="hsl:OE_1241R"/>
<dbReference type="HOGENOM" id="CLU_113319_0_0_2"/>
<dbReference type="PhylomeDB" id="B0R2R5"/>
<dbReference type="Proteomes" id="UP000001321">
    <property type="component" value="Chromosome"/>
</dbReference>
<dbReference type="GO" id="GO:0003677">
    <property type="term" value="F:DNA binding"/>
    <property type="evidence" value="ECO:0007669"/>
    <property type="project" value="UniProtKB-KW"/>
</dbReference>
<dbReference type="GO" id="GO:0003700">
    <property type="term" value="F:DNA-binding transcription factor activity"/>
    <property type="evidence" value="ECO:0007669"/>
    <property type="project" value="UniProtKB-UniRule"/>
</dbReference>
<dbReference type="GO" id="GO:0016151">
    <property type="term" value="F:nickel cation binding"/>
    <property type="evidence" value="ECO:0007669"/>
    <property type="project" value="UniProtKB-UniRule"/>
</dbReference>
<dbReference type="GO" id="GO:0010045">
    <property type="term" value="P:response to nickel cation"/>
    <property type="evidence" value="ECO:0007669"/>
    <property type="project" value="InterPro"/>
</dbReference>
<dbReference type="CDD" id="cd22231">
    <property type="entry name" value="RHH_NikR_HicB-like"/>
    <property type="match status" value="1"/>
</dbReference>
<dbReference type="Gene3D" id="3.30.70.1150">
    <property type="entry name" value="ACT-like. Chain A, domain 2"/>
    <property type="match status" value="1"/>
</dbReference>
<dbReference type="Gene3D" id="1.10.1220.10">
    <property type="entry name" value="Met repressor-like"/>
    <property type="match status" value="1"/>
</dbReference>
<dbReference type="HAMAP" id="MF_00476">
    <property type="entry name" value="NikR"/>
    <property type="match status" value="1"/>
</dbReference>
<dbReference type="InterPro" id="IPR027271">
    <property type="entry name" value="Acetolactate_synth/TF_NikR_C"/>
</dbReference>
<dbReference type="InterPro" id="IPR045865">
    <property type="entry name" value="ACT-like_dom_sf"/>
</dbReference>
<dbReference type="InterPro" id="IPR013321">
    <property type="entry name" value="Arc_rbn_hlx_hlx"/>
</dbReference>
<dbReference type="InterPro" id="IPR002145">
    <property type="entry name" value="CopG"/>
</dbReference>
<dbReference type="InterPro" id="IPR050192">
    <property type="entry name" value="CopG/NikR_regulator"/>
</dbReference>
<dbReference type="InterPro" id="IPR022988">
    <property type="entry name" value="Ni_resp_reg_NikR"/>
</dbReference>
<dbReference type="InterPro" id="IPR010985">
    <property type="entry name" value="Ribbon_hlx_hlx"/>
</dbReference>
<dbReference type="InterPro" id="IPR014864">
    <property type="entry name" value="TF_NikR_Ni-bd_C"/>
</dbReference>
<dbReference type="PANTHER" id="PTHR34719">
    <property type="entry name" value="NICKEL-RESPONSIVE REGULATOR"/>
    <property type="match status" value="1"/>
</dbReference>
<dbReference type="PANTHER" id="PTHR34719:SF3">
    <property type="entry name" value="NICKEL-RESPONSIVE REGULATOR-RELATED"/>
    <property type="match status" value="1"/>
</dbReference>
<dbReference type="Pfam" id="PF08753">
    <property type="entry name" value="NikR_C"/>
    <property type="match status" value="1"/>
</dbReference>
<dbReference type="Pfam" id="PF01402">
    <property type="entry name" value="RHH_1"/>
    <property type="match status" value="1"/>
</dbReference>
<dbReference type="SUPFAM" id="SSF55021">
    <property type="entry name" value="ACT-like"/>
    <property type="match status" value="1"/>
</dbReference>
<dbReference type="SUPFAM" id="SSF47598">
    <property type="entry name" value="Ribbon-helix-helix"/>
    <property type="match status" value="1"/>
</dbReference>
<name>NIKR_HALS3</name>
<sequence>MSVVSVSMPEELLERLDDFADDHGYTGRSEVVREASRNLLGEFEDKKLEGRELMGVVTVVFDYETTTVEEKMMHLRHEHEGLVASNFHSHVGGHHCMELFVLEGSLESISTFVGKIRATKDTLTIDYSVLPVDEFGGLADVS</sequence>
<proteinExistence type="inferred from homology"/>
<evidence type="ECO:0000255" key="1">
    <source>
        <dbReference type="HAMAP-Rule" id="MF_00476"/>
    </source>
</evidence>